<dbReference type="EMBL" id="AB037280">
    <property type="protein sequence ID" value="BAB21252.1"/>
    <property type="molecule type" value="Genomic_DNA"/>
</dbReference>
<dbReference type="EMBL" id="AAFI02000003">
    <property type="protein sequence ID" value="EAL73150.1"/>
    <property type="molecule type" value="Genomic_DNA"/>
</dbReference>
<dbReference type="EMBL" id="AF015712">
    <property type="protein sequence ID" value="AAC16438.1"/>
    <property type="status" value="ALT_SEQ"/>
    <property type="molecule type" value="mRNA"/>
</dbReference>
<dbReference type="RefSeq" id="XP_647135.1">
    <property type="nucleotide sequence ID" value="XM_642043.1"/>
</dbReference>
<dbReference type="SMR" id="Q9BPU3"/>
<dbReference type="FunCoup" id="Q9BPU3">
    <property type="interactions" value="138"/>
</dbReference>
<dbReference type="STRING" id="44689.Q9BPU3"/>
<dbReference type="PaxDb" id="44689-DDB0191126"/>
<dbReference type="EnsemblProtists" id="EAL73150">
    <property type="protein sequence ID" value="EAL73150"/>
    <property type="gene ID" value="DDB_G0267396"/>
</dbReference>
<dbReference type="GeneID" id="8615938"/>
<dbReference type="KEGG" id="ddi:DDB_G0267396"/>
<dbReference type="dictyBase" id="DDB_G0267396">
    <property type="gene designation" value="kif2"/>
</dbReference>
<dbReference type="VEuPathDB" id="AmoebaDB:DDB_G0267396"/>
<dbReference type="eggNOG" id="KOG0239">
    <property type="taxonomic scope" value="Eukaryota"/>
</dbReference>
<dbReference type="HOGENOM" id="CLU_001485_12_1_1"/>
<dbReference type="InParanoid" id="Q9BPU3"/>
<dbReference type="OMA" id="ECFFLEI"/>
<dbReference type="PhylomeDB" id="Q9BPU3"/>
<dbReference type="PRO" id="PR:Q9BPU3"/>
<dbReference type="Proteomes" id="UP000002195">
    <property type="component" value="Chromosome 1"/>
</dbReference>
<dbReference type="GO" id="GO:0005737">
    <property type="term" value="C:cytoplasm"/>
    <property type="evidence" value="ECO:0000318"/>
    <property type="project" value="GO_Central"/>
</dbReference>
<dbReference type="GO" id="GO:0005871">
    <property type="term" value="C:kinesin complex"/>
    <property type="evidence" value="ECO:0000318"/>
    <property type="project" value="GO_Central"/>
</dbReference>
<dbReference type="GO" id="GO:0005874">
    <property type="term" value="C:microtubule"/>
    <property type="evidence" value="ECO:0000318"/>
    <property type="project" value="GO_Central"/>
</dbReference>
<dbReference type="GO" id="GO:0005815">
    <property type="term" value="C:microtubule organizing center"/>
    <property type="evidence" value="ECO:0000318"/>
    <property type="project" value="GO_Central"/>
</dbReference>
<dbReference type="GO" id="GO:0072686">
    <property type="term" value="C:mitotic spindle"/>
    <property type="evidence" value="ECO:0000314"/>
    <property type="project" value="dictyBase"/>
</dbReference>
<dbReference type="GO" id="GO:0005634">
    <property type="term" value="C:nucleus"/>
    <property type="evidence" value="ECO:0000314"/>
    <property type="project" value="dictyBase"/>
</dbReference>
<dbReference type="GO" id="GO:0005524">
    <property type="term" value="F:ATP binding"/>
    <property type="evidence" value="ECO:0007669"/>
    <property type="project" value="UniProtKB-KW"/>
</dbReference>
<dbReference type="GO" id="GO:0016887">
    <property type="term" value="F:ATP hydrolysis activity"/>
    <property type="evidence" value="ECO:0000318"/>
    <property type="project" value="GO_Central"/>
</dbReference>
<dbReference type="GO" id="GO:0008017">
    <property type="term" value="F:microtubule binding"/>
    <property type="evidence" value="ECO:0000314"/>
    <property type="project" value="dictyBase"/>
</dbReference>
<dbReference type="GO" id="GO:0003777">
    <property type="term" value="F:microtubule motor activity"/>
    <property type="evidence" value="ECO:0000314"/>
    <property type="project" value="dictyBase"/>
</dbReference>
<dbReference type="GO" id="GO:0008574">
    <property type="term" value="F:plus-end-directed microtubule motor activity"/>
    <property type="evidence" value="ECO:0000314"/>
    <property type="project" value="dictyBase"/>
</dbReference>
<dbReference type="GO" id="GO:0007018">
    <property type="term" value="P:microtubule-based movement"/>
    <property type="evidence" value="ECO:0000318"/>
    <property type="project" value="GO_Central"/>
</dbReference>
<dbReference type="GO" id="GO:0090307">
    <property type="term" value="P:mitotic spindle assembly"/>
    <property type="evidence" value="ECO:0000318"/>
    <property type="project" value="GO_Central"/>
</dbReference>
<dbReference type="CDD" id="cd01366">
    <property type="entry name" value="KISc_C_terminal"/>
    <property type="match status" value="1"/>
</dbReference>
<dbReference type="FunFam" id="3.40.850.10:FF:000294">
    <property type="entry name" value="Kinesin-related protein 2"/>
    <property type="match status" value="1"/>
</dbReference>
<dbReference type="Gene3D" id="3.40.850.10">
    <property type="entry name" value="Kinesin motor domain"/>
    <property type="match status" value="1"/>
</dbReference>
<dbReference type="InterPro" id="IPR027640">
    <property type="entry name" value="Kinesin-like_fam"/>
</dbReference>
<dbReference type="InterPro" id="IPR001752">
    <property type="entry name" value="Kinesin_motor_dom"/>
</dbReference>
<dbReference type="InterPro" id="IPR036961">
    <property type="entry name" value="Kinesin_motor_dom_sf"/>
</dbReference>
<dbReference type="InterPro" id="IPR027417">
    <property type="entry name" value="P-loop_NTPase"/>
</dbReference>
<dbReference type="PANTHER" id="PTHR47972">
    <property type="entry name" value="KINESIN-LIKE PROTEIN KLP-3"/>
    <property type="match status" value="1"/>
</dbReference>
<dbReference type="PANTHER" id="PTHR47972:SF45">
    <property type="entry name" value="PROTEIN CLARET SEGREGATIONAL"/>
    <property type="match status" value="1"/>
</dbReference>
<dbReference type="Pfam" id="PF00225">
    <property type="entry name" value="Kinesin"/>
    <property type="match status" value="1"/>
</dbReference>
<dbReference type="PRINTS" id="PR00380">
    <property type="entry name" value="KINESINHEAVY"/>
</dbReference>
<dbReference type="SMART" id="SM00129">
    <property type="entry name" value="KISc"/>
    <property type="match status" value="1"/>
</dbReference>
<dbReference type="SUPFAM" id="SSF52540">
    <property type="entry name" value="P-loop containing nucleoside triphosphate hydrolases"/>
    <property type="match status" value="1"/>
</dbReference>
<dbReference type="PROSITE" id="PS50067">
    <property type="entry name" value="KINESIN_MOTOR_2"/>
    <property type="match status" value="1"/>
</dbReference>
<gene>
    <name type="primary">kif2</name>
    <name type="synonym">GPK2</name>
    <name type="synonym">K2</name>
    <name type="synonym">ksnB</name>
    <name type="ORF">DDB_G0267396</name>
</gene>
<keyword id="KW-0067">ATP-binding</keyword>
<keyword id="KW-0175">Coiled coil</keyword>
<keyword id="KW-0963">Cytoplasm</keyword>
<keyword id="KW-0206">Cytoskeleton</keyword>
<keyword id="KW-0493">Microtubule</keyword>
<keyword id="KW-0505">Motor protein</keyword>
<keyword id="KW-0547">Nucleotide-binding</keyword>
<keyword id="KW-0539">Nucleus</keyword>
<keyword id="KW-1185">Reference proteome</keyword>
<keyword id="KW-0813">Transport</keyword>
<evidence type="ECO:0000255" key="1"/>
<evidence type="ECO:0000255" key="2">
    <source>
        <dbReference type="PROSITE-ProRule" id="PRU00283"/>
    </source>
</evidence>
<evidence type="ECO:0000256" key="3">
    <source>
        <dbReference type="SAM" id="MobiDB-lite"/>
    </source>
</evidence>
<evidence type="ECO:0000269" key="4">
    <source>
    </source>
</evidence>
<evidence type="ECO:0000269" key="5">
    <source>
    </source>
</evidence>
<evidence type="ECO:0000305" key="6"/>
<sequence>MEKRQLYSSQSQSQPLNIITNTINSRPSLLRKPASSSSQSNDRISYPPSTDSKFIQQQYHQPLLTNTDIKLEDIESSSSNNNPLKNSINNVSMQISQLNSSHHSRALLMQKRNNPTTNIRPTVKKKLDDTHKPLTSNFKKPITPISKLNTNMNNNNINNKNNNININSNNSSNSNNNILSPVQNNTISPNSNLLNSSIKFEKSNFFSTMYSSPTTITTTSTTLNNDNNNNISISSSCSNNSSFDLQQQHALHERMNKIDQFTQTVRGNLQSQFDNISEQLKPPRLSLSIQDIKTRLDFEEKNKEVEKIKLELKNVLQSLKEKEKELMEAHYKVSQVSVLKDNMERDLQQSNQMILDLQHEIRSSSLKAIQVDEKFNNMKDVTKDLDDEILRLNQLVRERDTEIESLRKENRELLEKSRSDEKVRRKLHNTIQELKGNIRVFCRIRPDFSSGQGANGSVFNIPAGTDNLVEVKSPTIDSFNGEASIKKSTFTFDRVFGPSSTQELVFEDISQLVQSSLDGYNTCIFTYGQTGSGKTHSILGDLKVPSQRGMIPRTVEKIFSSIQDLTEKGWTYQIECFFLEIYNETINDLLNTTTTTTGGNSKSNEIKYEIKHNPDTNVTTVTNMTVVPVTHPSQVYELLNLANKNRSVAKTLCNERSSRSHTVFQLKLIGYNQQSSERTQGLLNLIDLAGSERVSRSGVEGKQLKETQAINKSLSSLGDVISALANKEQHIPYRNSKLTFLLQNSIGGNSKTLMFVNISPELKDLQESTSSLRFAAKVNSCELGAARKQKII</sequence>
<name>KIF2_DICDI</name>
<comment type="function">
    <text evidence="4">Microtubule-dependent motor that is probably involved in microtubule organization in the mitotic spindle.</text>
</comment>
<comment type="subcellular location">
    <subcellularLocation>
        <location evidence="4">Nucleus</location>
    </subcellularLocation>
    <subcellularLocation>
        <location evidence="4">Cytoplasm</location>
        <location evidence="4">Cytoskeleton</location>
        <location evidence="4">Spindle</location>
    </subcellularLocation>
    <text>Localizes in the nucleus at the interphase and on the mitotic spindle during mitosis.</text>
</comment>
<comment type="induction">
    <text evidence="5">During the developmental stage.</text>
</comment>
<comment type="similarity">
    <text evidence="2">Belongs to the TRAFAC class myosin-kinesin ATPase superfamily. Kinesin family. NCD subfamily.</text>
</comment>
<comment type="sequence caution" evidence="6">
    <conflict type="miscellaneous discrepancy">
        <sequence resource="EMBL-CDS" id="AAC16438"/>
    </conflict>
    <text>Contaminating sequence. Sequence of unknown origin in the N-terminal part.</text>
</comment>
<protein>
    <recommendedName>
        <fullName>Kinesin-related protein 2</fullName>
    </recommendedName>
    <alternativeName>
        <fullName>Kinesin family member 2</fullName>
    </alternativeName>
    <alternativeName>
        <fullName>Kinesin-14</fullName>
    </alternativeName>
</protein>
<organism>
    <name type="scientific">Dictyostelium discoideum</name>
    <name type="common">Social amoeba</name>
    <dbReference type="NCBI Taxonomy" id="44689"/>
    <lineage>
        <taxon>Eukaryota</taxon>
        <taxon>Amoebozoa</taxon>
        <taxon>Evosea</taxon>
        <taxon>Eumycetozoa</taxon>
        <taxon>Dictyostelia</taxon>
        <taxon>Dictyosteliales</taxon>
        <taxon>Dictyosteliaceae</taxon>
        <taxon>Dictyostelium</taxon>
    </lineage>
</organism>
<feature type="chain" id="PRO_0000365577" description="Kinesin-related protein 2">
    <location>
        <begin position="1"/>
        <end position="792"/>
    </location>
</feature>
<feature type="domain" description="Kinesin motor" evidence="2">
    <location>
        <begin position="437"/>
        <end position="781"/>
    </location>
</feature>
<feature type="region of interest" description="Disordered" evidence="3">
    <location>
        <begin position="22"/>
        <end position="50"/>
    </location>
</feature>
<feature type="region of interest" description="Disordered" evidence="3">
    <location>
        <begin position="162"/>
        <end position="183"/>
    </location>
</feature>
<feature type="coiled-coil region" evidence="1">
    <location>
        <begin position="284"/>
        <end position="423"/>
    </location>
</feature>
<feature type="compositionally biased region" description="Polar residues" evidence="3">
    <location>
        <begin position="34"/>
        <end position="50"/>
    </location>
</feature>
<feature type="binding site" evidence="2">
    <location>
        <begin position="528"/>
        <end position="535"/>
    </location>
    <ligand>
        <name>ATP</name>
        <dbReference type="ChEBI" id="CHEBI:30616"/>
    </ligand>
</feature>
<proteinExistence type="evidence at transcript level"/>
<accession>Q9BPU3</accession>
<accession>O15718</accession>
<accession>Q55GP9</accession>
<reference key="1">
    <citation type="journal article" date="1998" name="Mol. Biol. Cell">
        <title>A developmentally regulated kinesin-related motor protein from Dictyostelium discoideum.</title>
        <authorList>
            <person name="de Hostos E.L."/>
            <person name="McCaffrey G."/>
            <person name="Sucgang R."/>
            <person name="Pierce D.W."/>
            <person name="Vale R.D."/>
        </authorList>
    </citation>
    <scope>NUCLEOTIDE SEQUENCE [GENOMIC DNA]</scope>
    <scope>INDUCTION</scope>
    <source>
        <strain>AX2</strain>
    </source>
</reference>
<reference key="2">
    <citation type="journal article" date="2000" name="FEBS Lett.">
        <title>Characterization of a C-terminal-type kinesin-related protein from Dictyostelium discoideum.</title>
        <authorList>
            <person name="Iwai S."/>
            <person name="Suyama E."/>
            <person name="Adachi H."/>
            <person name="Sutoh K."/>
        </authorList>
    </citation>
    <scope>NUCLEOTIDE SEQUENCE [GENOMIC DNA]</scope>
    <scope>FUNCTION</scope>
    <scope>SUBCELLULAR LOCATION</scope>
    <source>
        <strain>AX2</strain>
    </source>
</reference>
<reference key="3">
    <citation type="journal article" date="2005" name="Nature">
        <title>The genome of the social amoeba Dictyostelium discoideum.</title>
        <authorList>
            <person name="Eichinger L."/>
            <person name="Pachebat J.A."/>
            <person name="Gloeckner G."/>
            <person name="Rajandream M.A."/>
            <person name="Sucgang R."/>
            <person name="Berriman M."/>
            <person name="Song J."/>
            <person name="Olsen R."/>
            <person name="Szafranski K."/>
            <person name="Xu Q."/>
            <person name="Tunggal B."/>
            <person name="Kummerfeld S."/>
            <person name="Madera M."/>
            <person name="Konfortov B.A."/>
            <person name="Rivero F."/>
            <person name="Bankier A.T."/>
            <person name="Lehmann R."/>
            <person name="Hamlin N."/>
            <person name="Davies R."/>
            <person name="Gaudet P."/>
            <person name="Fey P."/>
            <person name="Pilcher K."/>
            <person name="Chen G."/>
            <person name="Saunders D."/>
            <person name="Sodergren E.J."/>
            <person name="Davis P."/>
            <person name="Kerhornou A."/>
            <person name="Nie X."/>
            <person name="Hall N."/>
            <person name="Anjard C."/>
            <person name="Hemphill L."/>
            <person name="Bason N."/>
            <person name="Farbrother P."/>
            <person name="Desany B."/>
            <person name="Just E."/>
            <person name="Morio T."/>
            <person name="Rost R."/>
            <person name="Churcher C.M."/>
            <person name="Cooper J."/>
            <person name="Haydock S."/>
            <person name="van Driessche N."/>
            <person name="Cronin A."/>
            <person name="Goodhead I."/>
            <person name="Muzny D.M."/>
            <person name="Mourier T."/>
            <person name="Pain A."/>
            <person name="Lu M."/>
            <person name="Harper D."/>
            <person name="Lindsay R."/>
            <person name="Hauser H."/>
            <person name="James K.D."/>
            <person name="Quiles M."/>
            <person name="Madan Babu M."/>
            <person name="Saito T."/>
            <person name="Buchrieser C."/>
            <person name="Wardroper A."/>
            <person name="Felder M."/>
            <person name="Thangavelu M."/>
            <person name="Johnson D."/>
            <person name="Knights A."/>
            <person name="Loulseged H."/>
            <person name="Mungall K.L."/>
            <person name="Oliver K."/>
            <person name="Price C."/>
            <person name="Quail M.A."/>
            <person name="Urushihara H."/>
            <person name="Hernandez J."/>
            <person name="Rabbinowitsch E."/>
            <person name="Steffen D."/>
            <person name="Sanders M."/>
            <person name="Ma J."/>
            <person name="Kohara Y."/>
            <person name="Sharp S."/>
            <person name="Simmonds M.N."/>
            <person name="Spiegler S."/>
            <person name="Tivey A."/>
            <person name="Sugano S."/>
            <person name="White B."/>
            <person name="Walker D."/>
            <person name="Woodward J.R."/>
            <person name="Winckler T."/>
            <person name="Tanaka Y."/>
            <person name="Shaulsky G."/>
            <person name="Schleicher M."/>
            <person name="Weinstock G.M."/>
            <person name="Rosenthal A."/>
            <person name="Cox E.C."/>
            <person name="Chisholm R.L."/>
            <person name="Gibbs R.A."/>
            <person name="Loomis W.F."/>
            <person name="Platzer M."/>
            <person name="Kay R.R."/>
            <person name="Williams J.G."/>
            <person name="Dear P.H."/>
            <person name="Noegel A.A."/>
            <person name="Barrell B.G."/>
            <person name="Kuspa A."/>
        </authorList>
    </citation>
    <scope>NUCLEOTIDE SEQUENCE [LARGE SCALE GENOMIC DNA]</scope>
    <source>
        <strain>AX4</strain>
    </source>
</reference>
<reference key="4">
    <citation type="submission" date="1998-05" db="EMBL/GenBank/DDBJ databases">
        <authorList>
            <person name="Mayorga O."/>
            <person name="de Hostos E.L."/>
        </authorList>
    </citation>
    <scope>NUCLEOTIDE SEQUENCE [MRNA] OF 89-792</scope>
    <source>
        <strain>AX3</strain>
    </source>
</reference>
<reference key="5">
    <citation type="journal article" date="2003" name="BMC Genomics">
        <title>Identification and phylogenetic analysis of Dictyostelium discoideum kinesin proteins.</title>
        <authorList>
            <person name="Kollmar M."/>
            <person name="Gloeckner G."/>
        </authorList>
    </citation>
    <scope>IDENTIFICATION</scope>
    <scope>NOMENCLATURE</scope>
</reference>